<proteinExistence type="evidence at transcript level"/>
<sequence>MGPRRLLLVAVGLSLCGPLLSSRVPMRQPESERMYATPYATPNPRSFFLRNPSEDTFEQFPLGDEEEKNESIPLEGRAVYLNKSRFPPMPPPPFISEDASGYLTSPWLTLFIPSVYTFVFIVSLPLNILAIAVFVFRMKVKKPAVVYMLHLAMADVLFVSVLPFKISYYFSGTDWQFGSGMCRFATAACYCNMYASIMLMTVISIDRFLAVVYPIQSLSWRTLGRANFTCVVIWVMAIMGVVPLLLKEQTTQVPGLNITTCHDVLNETLLHGFYSYYFSAFSAIFFLVPLIISTVCYTSIIRCLSSSAVANRSKKSRALFLSAAVFCIFIVCFGPTNVLLIVHYLLLSDSPGTETAYFAYLLCVCVTSVASCIDPLIYYYASSECQKHLYSILCCRESSDSNSCNSTGQLMPSKMDTCSSHLNNSIYKKLLA</sequence>
<gene>
    <name evidence="8" type="primary">F2r</name>
    <name type="synonym">Par1</name>
</gene>
<organism>
    <name type="scientific">Rattus norvegicus</name>
    <name type="common">Rat</name>
    <dbReference type="NCBI Taxonomy" id="10116"/>
    <lineage>
        <taxon>Eukaryota</taxon>
        <taxon>Metazoa</taxon>
        <taxon>Chordata</taxon>
        <taxon>Craniata</taxon>
        <taxon>Vertebrata</taxon>
        <taxon>Euteleostomi</taxon>
        <taxon>Mammalia</taxon>
        <taxon>Eutheria</taxon>
        <taxon>Euarchontoglires</taxon>
        <taxon>Glires</taxon>
        <taxon>Rodentia</taxon>
        <taxon>Myomorpha</taxon>
        <taxon>Muroidea</taxon>
        <taxon>Muridae</taxon>
        <taxon>Murinae</taxon>
        <taxon>Rattus</taxon>
    </lineage>
</organism>
<accession>P26824</accession>
<reference key="1">
    <citation type="journal article" date="1992" name="J. Biol. Chem.">
        <title>Molecular cloning of the rat vascular smooth muscle thrombin receptor. Evidence for in vitro regulation by basic fibroblast growth factor.</title>
        <authorList>
            <person name="Zhong C."/>
            <person name="Hayzer D.J."/>
            <person name="Corsen M.A."/>
            <person name="Wick K."/>
            <person name="Runge M.S."/>
        </authorList>
    </citation>
    <scope>NUCLEOTIDE SEQUENCE [MRNA]</scope>
    <source>
        <tissue>Aortic smooth muscle</tissue>
    </source>
</reference>
<reference key="2">
    <citation type="journal article" date="2004" name="Neuroscience">
        <title>Expression of protease-activated receptors (PARs) in OLN-93 oligodendroglial cells and mechanism of PAR-1-induced calcium signaling.</title>
        <authorList>
            <person name="Wang Y."/>
            <person name="Richter-Landsberg C."/>
            <person name="Reiser G."/>
        </authorList>
    </citation>
    <scope>FUNCTION</scope>
    <scope>TISSUE SPECIFICITY</scope>
    <scope>SUBCELLULAR LOCATION</scope>
</reference>
<evidence type="ECO:0000250" key="1"/>
<evidence type="ECO:0000250" key="2">
    <source>
        <dbReference type="UniProtKB" id="P25116"/>
    </source>
</evidence>
<evidence type="ECO:0000250" key="3">
    <source>
        <dbReference type="UniProtKB" id="P30558"/>
    </source>
</evidence>
<evidence type="ECO:0000255" key="4"/>
<evidence type="ECO:0000255" key="5">
    <source>
        <dbReference type="PROSITE-ProRule" id="PRU00521"/>
    </source>
</evidence>
<evidence type="ECO:0000269" key="6">
    <source>
    </source>
</evidence>
<evidence type="ECO:0000305" key="7"/>
<evidence type="ECO:0000312" key="8">
    <source>
        <dbReference type="RGD" id="2586"/>
    </source>
</evidence>
<name>PAR1_RAT</name>
<keyword id="KW-0094">Blood coagulation</keyword>
<keyword id="KW-1003">Cell membrane</keyword>
<keyword id="KW-1015">Disulfide bond</keyword>
<keyword id="KW-0297">G-protein coupled receptor</keyword>
<keyword id="KW-0325">Glycoprotein</keyword>
<keyword id="KW-0356">Hemostasis</keyword>
<keyword id="KW-0472">Membrane</keyword>
<keyword id="KW-0597">Phosphoprotein</keyword>
<keyword id="KW-0675">Receptor</keyword>
<keyword id="KW-1185">Reference proteome</keyword>
<keyword id="KW-0732">Signal</keyword>
<keyword id="KW-0807">Transducer</keyword>
<keyword id="KW-0812">Transmembrane</keyword>
<keyword id="KW-1133">Transmembrane helix</keyword>
<comment type="function">
    <text evidence="2 3 6">High affinity receptor that binds the activated thrombin, leading to calcium release from intracellular stores (PubMed:15145074). The thrombin-activated receptor signaling pathway is mediated through PTX-insensitive G proteins, activation of phospholipase C resulting in the production of 1D-myo-inositol 1,4,5-trisphosphate (InsP3) which binds to InsP3 receptors causing calcium release from the stores (PubMed:15145074). In astrocytes, the calcium released into the cytosol allows the Ca(2+)-dependent release of L-glutamate into the synaptic cleft through BEST1, that targets the neuronal postsynaptic GRIN2A/NMDAR receptor resulting in the synaptic plasticity regulation (By similarity). May play a role in platelets activation and in vascular development (By similarity). Mediates up-regulation of pro-inflammatory cytokines, such as MCP-1/CCL2 and IL6, triggered by coagulation factor Xa (F10) in cardiac fibroblasts and umbilical vein endothelial cells (By similarity).</text>
</comment>
<comment type="subcellular location">
    <subcellularLocation>
        <location evidence="6">Cell membrane</location>
        <topology>Multi-pass membrane protein</topology>
    </subcellularLocation>
</comment>
<comment type="tissue specificity">
    <text evidence="6">Expressed in primary cultured oligodendrocytes.</text>
</comment>
<comment type="domain">
    <text evidence="1">The cleaved signal peptide may not be degraded and may function as an intracellular angiogenesis inhibitor peptide known as parstatin.</text>
</comment>
<comment type="PTM">
    <text evidence="2">Proteolytic cleavage by thrombin generates a new N-terminus that functions as a tethered ligand. Also proteolytically cleaved by cathepsin CTSG.</text>
</comment>
<comment type="PTM">
    <text evidence="1">Phosphorylated in the C-terminal tail; probably mediating desensitization prior to the uncoupling and internalization of the receptor.</text>
</comment>
<comment type="similarity">
    <text evidence="5">Belongs to the G-protein coupled receptor 1 family.</text>
</comment>
<protein>
    <recommendedName>
        <fullName evidence="7">Proteinase-activated receptor 1</fullName>
        <shortName>PAR-1</shortName>
    </recommendedName>
    <alternativeName>
        <fullName>Thrombin receptor</fullName>
    </alternativeName>
</protein>
<feature type="signal peptide" evidence="1">
    <location>
        <begin position="1"/>
        <end position="21"/>
    </location>
</feature>
<feature type="propeptide" id="PRO_0000012746" description="Removed for receptor activation" evidence="1">
    <location>
        <begin position="22"/>
        <end position="45"/>
    </location>
</feature>
<feature type="chain" id="PRO_0000012747" description="Proteinase-activated receptor 1">
    <location>
        <begin position="46"/>
        <end position="432"/>
    </location>
</feature>
<feature type="topological domain" description="Extracellular" evidence="4">
    <location>
        <begin position="46"/>
        <end position="109"/>
    </location>
</feature>
<feature type="transmembrane region" description="Helical; Name=1" evidence="4">
    <location>
        <begin position="110"/>
        <end position="135"/>
    </location>
</feature>
<feature type="topological domain" description="Cytoplasmic" evidence="4">
    <location>
        <begin position="136"/>
        <end position="144"/>
    </location>
</feature>
<feature type="transmembrane region" description="Helical; Name=2" evidence="4">
    <location>
        <begin position="145"/>
        <end position="164"/>
    </location>
</feature>
<feature type="topological domain" description="Extracellular" evidence="4">
    <location>
        <begin position="165"/>
        <end position="183"/>
    </location>
</feature>
<feature type="transmembrane region" description="Helical; Name=3" evidence="4">
    <location>
        <begin position="184"/>
        <end position="205"/>
    </location>
</feature>
<feature type="topological domain" description="Cytoplasmic" evidence="4">
    <location>
        <begin position="206"/>
        <end position="225"/>
    </location>
</feature>
<feature type="transmembrane region" description="Helical; Name=4" evidence="4">
    <location>
        <begin position="226"/>
        <end position="246"/>
    </location>
</feature>
<feature type="topological domain" description="Extracellular" evidence="4">
    <location>
        <begin position="247"/>
        <end position="275"/>
    </location>
</feature>
<feature type="transmembrane region" description="Helical; Name=5" evidence="4">
    <location>
        <begin position="276"/>
        <end position="295"/>
    </location>
</feature>
<feature type="topological domain" description="Cytoplasmic" evidence="4">
    <location>
        <begin position="296"/>
        <end position="318"/>
    </location>
</feature>
<feature type="transmembrane region" description="Helical; Name=6" evidence="4">
    <location>
        <begin position="319"/>
        <end position="341"/>
    </location>
</feature>
<feature type="topological domain" description="Extracellular" evidence="4">
    <location>
        <begin position="342"/>
        <end position="357"/>
    </location>
</feature>
<feature type="transmembrane region" description="Helical; Name=7" evidence="4">
    <location>
        <begin position="358"/>
        <end position="381"/>
    </location>
</feature>
<feature type="topological domain" description="Cytoplasmic" evidence="4">
    <location>
        <begin position="382"/>
        <end position="432"/>
    </location>
</feature>
<feature type="site" description="Cleavage; by thrombin and CTSG" evidence="2">
    <location>
        <begin position="45"/>
        <end position="46"/>
    </location>
</feature>
<feature type="modified residue" description="Phosphoserine" evidence="2">
    <location>
        <position position="425"/>
    </location>
</feature>
<feature type="glycosylation site" description="N-linked (GlcNAc...) asparagine" evidence="4">
    <location>
        <position position="69"/>
    </location>
</feature>
<feature type="glycosylation site" description="N-linked (GlcNAc...) asparagine" evidence="4">
    <location>
        <position position="82"/>
    </location>
</feature>
<feature type="glycosylation site" description="N-linked (GlcNAc...) asparagine" evidence="4">
    <location>
        <position position="257"/>
    </location>
</feature>
<feature type="glycosylation site" description="N-linked (GlcNAc...) asparagine" evidence="4">
    <location>
        <position position="266"/>
    </location>
</feature>
<feature type="disulfide bond" evidence="5">
    <location>
        <begin position="182"/>
        <end position="261"/>
    </location>
</feature>
<dbReference type="EMBL" id="M81642">
    <property type="protein sequence ID" value="AAA42274.1"/>
    <property type="molecule type" value="mRNA"/>
</dbReference>
<dbReference type="PIR" id="A43448">
    <property type="entry name" value="A43448"/>
</dbReference>
<dbReference type="SMR" id="P26824"/>
<dbReference type="FunCoup" id="P26824">
    <property type="interactions" value="641"/>
</dbReference>
<dbReference type="STRING" id="10116.ENSRNOP00000065624"/>
<dbReference type="ChEMBL" id="CHEMBL6041"/>
<dbReference type="GlyCosmos" id="P26824">
    <property type="glycosylation" value="4 sites, No reported glycans"/>
</dbReference>
<dbReference type="GlyGen" id="P26824">
    <property type="glycosylation" value="4 sites"/>
</dbReference>
<dbReference type="PhosphoSitePlus" id="P26824"/>
<dbReference type="PaxDb" id="10116-ENSRNOP00000065624"/>
<dbReference type="UCSC" id="RGD:2586">
    <property type="organism name" value="rat"/>
</dbReference>
<dbReference type="AGR" id="RGD:2586"/>
<dbReference type="RGD" id="2586">
    <property type="gene designation" value="F2r"/>
</dbReference>
<dbReference type="eggNOG" id="ENOG502QTR0">
    <property type="taxonomic scope" value="Eukaryota"/>
</dbReference>
<dbReference type="InParanoid" id="P26824"/>
<dbReference type="PhylomeDB" id="P26824"/>
<dbReference type="Reactome" id="R-RNO-140875">
    <property type="pathway name" value="Common Pathway of Fibrin Clot Formation"/>
</dbReference>
<dbReference type="Reactome" id="R-RNO-375276">
    <property type="pathway name" value="Peptide ligand-binding receptors"/>
</dbReference>
<dbReference type="Reactome" id="R-RNO-416476">
    <property type="pathway name" value="G alpha (q) signalling events"/>
</dbReference>
<dbReference type="Reactome" id="R-RNO-456926">
    <property type="pathway name" value="Thrombin signalling through proteinase activated receptors (PARs)"/>
</dbReference>
<dbReference type="PRO" id="PR:P26824"/>
<dbReference type="Proteomes" id="UP000002494">
    <property type="component" value="Unplaced"/>
</dbReference>
<dbReference type="GO" id="GO:0005901">
    <property type="term" value="C:caveola"/>
    <property type="evidence" value="ECO:0000250"/>
    <property type="project" value="UniProtKB"/>
</dbReference>
<dbReference type="GO" id="GO:0009986">
    <property type="term" value="C:cell surface"/>
    <property type="evidence" value="ECO:0000266"/>
    <property type="project" value="RGD"/>
</dbReference>
<dbReference type="GO" id="GO:0005769">
    <property type="term" value="C:early endosome"/>
    <property type="evidence" value="ECO:0000266"/>
    <property type="project" value="RGD"/>
</dbReference>
<dbReference type="GO" id="GO:0005770">
    <property type="term" value="C:late endosome"/>
    <property type="evidence" value="ECO:0000266"/>
    <property type="project" value="RGD"/>
</dbReference>
<dbReference type="GO" id="GO:0031594">
    <property type="term" value="C:neuromuscular junction"/>
    <property type="evidence" value="ECO:0000314"/>
    <property type="project" value="RGD"/>
</dbReference>
<dbReference type="GO" id="GO:0005886">
    <property type="term" value="C:plasma membrane"/>
    <property type="evidence" value="ECO:0000314"/>
    <property type="project" value="UniProtKB"/>
</dbReference>
<dbReference type="GO" id="GO:0031094">
    <property type="term" value="C:platelet dense tubular network"/>
    <property type="evidence" value="ECO:0000250"/>
    <property type="project" value="UniProtKB"/>
</dbReference>
<dbReference type="GO" id="GO:0045211">
    <property type="term" value="C:postsynaptic membrane"/>
    <property type="evidence" value="ECO:0000314"/>
    <property type="project" value="RGD"/>
</dbReference>
<dbReference type="GO" id="GO:0004930">
    <property type="term" value="F:G protein-coupled receptor activity"/>
    <property type="evidence" value="ECO:0000250"/>
    <property type="project" value="UniProtKB"/>
</dbReference>
<dbReference type="GO" id="GO:0001965">
    <property type="term" value="F:G-protein alpha-subunit binding"/>
    <property type="evidence" value="ECO:0000250"/>
    <property type="project" value="UniProtKB"/>
</dbReference>
<dbReference type="GO" id="GO:0031681">
    <property type="term" value="F:G-protein beta-subunit binding"/>
    <property type="evidence" value="ECO:0000250"/>
    <property type="project" value="UniProtKB"/>
</dbReference>
<dbReference type="GO" id="GO:0005102">
    <property type="term" value="F:signaling receptor binding"/>
    <property type="evidence" value="ECO:0000266"/>
    <property type="project" value="RGD"/>
</dbReference>
<dbReference type="GO" id="GO:0015057">
    <property type="term" value="F:thrombin-activated receptor activity"/>
    <property type="evidence" value="ECO:0000250"/>
    <property type="project" value="UniProtKB"/>
</dbReference>
<dbReference type="GO" id="GO:0045217">
    <property type="term" value="P:cell-cell junction maintenance"/>
    <property type="evidence" value="ECO:0000266"/>
    <property type="project" value="RGD"/>
</dbReference>
<dbReference type="GO" id="GO:0002248">
    <property type="term" value="P:connective tissue replacement involved in inflammatory response wound healing"/>
    <property type="evidence" value="ECO:0000250"/>
    <property type="project" value="UniProtKB"/>
</dbReference>
<dbReference type="GO" id="GO:0036145">
    <property type="term" value="P:dendritic cell homeostasis"/>
    <property type="evidence" value="ECO:0000266"/>
    <property type="project" value="RGD"/>
</dbReference>
<dbReference type="GO" id="GO:0007529">
    <property type="term" value="P:establishment of synaptic specificity at neuromuscular junction"/>
    <property type="evidence" value="ECO:0000314"/>
    <property type="project" value="RGD"/>
</dbReference>
<dbReference type="GO" id="GO:0007186">
    <property type="term" value="P:G protein-coupled receptor signaling pathway"/>
    <property type="evidence" value="ECO:0000314"/>
    <property type="project" value="RGD"/>
</dbReference>
<dbReference type="GO" id="GO:0048873">
    <property type="term" value="P:homeostasis of number of cells within a tissue"/>
    <property type="evidence" value="ECO:0000250"/>
    <property type="project" value="UniProtKB"/>
</dbReference>
<dbReference type="GO" id="GO:0006954">
    <property type="term" value="P:inflammatory response"/>
    <property type="evidence" value="ECO:0000250"/>
    <property type="project" value="UniProtKB"/>
</dbReference>
<dbReference type="GO" id="GO:0008285">
    <property type="term" value="P:negative regulation of cell population proliferation"/>
    <property type="evidence" value="ECO:0000250"/>
    <property type="project" value="UniProtKB"/>
</dbReference>
<dbReference type="GO" id="GO:0003105">
    <property type="term" value="P:negative regulation of glomerular filtration"/>
    <property type="evidence" value="ECO:0000314"/>
    <property type="project" value="UniProtKB"/>
</dbReference>
<dbReference type="GO" id="GO:0043524">
    <property type="term" value="P:negative regulation of neuron apoptotic process"/>
    <property type="evidence" value="ECO:0000315"/>
    <property type="project" value="RGD"/>
</dbReference>
<dbReference type="GO" id="GO:1900134">
    <property type="term" value="P:negative regulation of renin secretion into blood stream"/>
    <property type="evidence" value="ECO:0000250"/>
    <property type="project" value="UniProtKB"/>
</dbReference>
<dbReference type="GO" id="GO:0007200">
    <property type="term" value="P:phospholipase C-activating G protein-coupled receptor signaling pathway"/>
    <property type="evidence" value="ECO:0000315"/>
    <property type="project" value="RGD"/>
</dbReference>
<dbReference type="GO" id="GO:0030168">
    <property type="term" value="P:platelet activation"/>
    <property type="evidence" value="ECO:0000250"/>
    <property type="project" value="UniProtKB"/>
</dbReference>
<dbReference type="GO" id="GO:0043065">
    <property type="term" value="P:positive regulation of apoptotic process"/>
    <property type="evidence" value="ECO:0000250"/>
    <property type="project" value="UniProtKB"/>
</dbReference>
<dbReference type="GO" id="GO:0030194">
    <property type="term" value="P:positive regulation of blood coagulation"/>
    <property type="evidence" value="ECO:0000250"/>
    <property type="project" value="UniProtKB"/>
</dbReference>
<dbReference type="GO" id="GO:0051928">
    <property type="term" value="P:positive regulation of calcium ion transport"/>
    <property type="evidence" value="ECO:0000315"/>
    <property type="project" value="RGD"/>
</dbReference>
<dbReference type="GO" id="GO:0043123">
    <property type="term" value="P:positive regulation of canonical NF-kappaB signal transduction"/>
    <property type="evidence" value="ECO:0000250"/>
    <property type="project" value="UniProtKB"/>
</dbReference>
<dbReference type="GO" id="GO:0030335">
    <property type="term" value="P:positive regulation of cell migration"/>
    <property type="evidence" value="ECO:0000250"/>
    <property type="project" value="UniProtKB"/>
</dbReference>
<dbReference type="GO" id="GO:0008284">
    <property type="term" value="P:positive regulation of cell population proliferation"/>
    <property type="evidence" value="ECO:0000314"/>
    <property type="project" value="RGD"/>
</dbReference>
<dbReference type="GO" id="GO:0032967">
    <property type="term" value="P:positive regulation of collagen biosynthetic process"/>
    <property type="evidence" value="ECO:0000250"/>
    <property type="project" value="UniProtKB"/>
</dbReference>
<dbReference type="GO" id="GO:0007204">
    <property type="term" value="P:positive regulation of cytosolic calcium ion concentration"/>
    <property type="evidence" value="ECO:0000250"/>
    <property type="project" value="UniProtKB"/>
</dbReference>
<dbReference type="GO" id="GO:0045893">
    <property type="term" value="P:positive regulation of DNA-templated transcription"/>
    <property type="evidence" value="ECO:0000250"/>
    <property type="project" value="UniProtKB"/>
</dbReference>
<dbReference type="GO" id="GO:0070374">
    <property type="term" value="P:positive regulation of ERK1 and ERK2 cascade"/>
    <property type="evidence" value="ECO:0000250"/>
    <property type="project" value="UniProtKB"/>
</dbReference>
<dbReference type="GO" id="GO:0032755">
    <property type="term" value="P:positive regulation of interleukin-6 production"/>
    <property type="evidence" value="ECO:0000250"/>
    <property type="project" value="UniProtKB"/>
</dbReference>
<dbReference type="GO" id="GO:0032757">
    <property type="term" value="P:positive regulation of interleukin-8 production"/>
    <property type="evidence" value="ECO:0000250"/>
    <property type="project" value="UniProtKB"/>
</dbReference>
<dbReference type="GO" id="GO:0043410">
    <property type="term" value="P:positive regulation of MAPK cascade"/>
    <property type="evidence" value="ECO:0000315"/>
    <property type="project" value="RGD"/>
</dbReference>
<dbReference type="GO" id="GO:0051897">
    <property type="term" value="P:positive regulation of phosphatidylinositol 3-kinase/protein kinase B signal transduction"/>
    <property type="evidence" value="ECO:0000250"/>
    <property type="project" value="UniProtKB"/>
</dbReference>
<dbReference type="GO" id="GO:0046427">
    <property type="term" value="P:positive regulation of receptor signaling pathway via JAK-STAT"/>
    <property type="evidence" value="ECO:0000250"/>
    <property type="project" value="UniProtKB"/>
</dbReference>
<dbReference type="GO" id="GO:0051281">
    <property type="term" value="P:positive regulation of release of sequestered calcium ion into cytosol"/>
    <property type="evidence" value="ECO:0000250"/>
    <property type="project" value="UniProtKB"/>
</dbReference>
<dbReference type="GO" id="GO:0035025">
    <property type="term" value="P:positive regulation of Rho protein signal transduction"/>
    <property type="evidence" value="ECO:0000250"/>
    <property type="project" value="UniProtKB"/>
</dbReference>
<dbReference type="GO" id="GO:0045987">
    <property type="term" value="P:positive regulation of smooth muscle contraction"/>
    <property type="evidence" value="ECO:0000314"/>
    <property type="project" value="RGD"/>
</dbReference>
<dbReference type="GO" id="GO:0045907">
    <property type="term" value="P:positive regulation of vasoconstriction"/>
    <property type="evidence" value="ECO:0000314"/>
    <property type="project" value="RGD"/>
</dbReference>
<dbReference type="GO" id="GO:0030193">
    <property type="term" value="P:regulation of blood coagulation"/>
    <property type="evidence" value="ECO:0000266"/>
    <property type="project" value="RGD"/>
</dbReference>
<dbReference type="GO" id="GO:0032651">
    <property type="term" value="P:regulation of interleukin-1 beta production"/>
    <property type="evidence" value="ECO:0000250"/>
    <property type="project" value="UniProtKB"/>
</dbReference>
<dbReference type="GO" id="GO:0048167">
    <property type="term" value="P:regulation of synaptic plasticity"/>
    <property type="evidence" value="ECO:0000250"/>
    <property type="project" value="UniProtKB"/>
</dbReference>
<dbReference type="GO" id="GO:0051209">
    <property type="term" value="P:release of sequestered calcium ion into cytosol"/>
    <property type="evidence" value="ECO:0000315"/>
    <property type="project" value="RGD"/>
</dbReference>
<dbReference type="GO" id="GO:0032496">
    <property type="term" value="P:response to lipopolysaccharide"/>
    <property type="evidence" value="ECO:0000250"/>
    <property type="project" value="UniProtKB"/>
</dbReference>
<dbReference type="GO" id="GO:0009611">
    <property type="term" value="P:response to wounding"/>
    <property type="evidence" value="ECO:0000250"/>
    <property type="project" value="UniProtKB"/>
</dbReference>
<dbReference type="GO" id="GO:0070493">
    <property type="term" value="P:thrombin-activated receptor signaling pathway"/>
    <property type="evidence" value="ECO:0000250"/>
    <property type="project" value="UniProtKB"/>
</dbReference>
<dbReference type="GO" id="GO:0099553">
    <property type="term" value="P:trans-synaptic signaling by endocannabinoid, modulating synaptic transmission"/>
    <property type="evidence" value="ECO:0000266"/>
    <property type="project" value="RGD"/>
</dbReference>
<dbReference type="CDD" id="cd15369">
    <property type="entry name" value="7tmA_PAR1"/>
    <property type="match status" value="1"/>
</dbReference>
<dbReference type="FunFam" id="1.20.1070.10:FF:000040">
    <property type="entry name" value="Coagulation factor 2 (thrombin) receptor"/>
    <property type="match status" value="1"/>
</dbReference>
<dbReference type="Gene3D" id="1.20.1070.10">
    <property type="entry name" value="Rhodopsin 7-helix transmembrane proteins"/>
    <property type="match status" value="1"/>
</dbReference>
<dbReference type="InterPro" id="IPR000276">
    <property type="entry name" value="GPCR_Rhodpsn"/>
</dbReference>
<dbReference type="InterPro" id="IPR017452">
    <property type="entry name" value="GPCR_Rhodpsn_7TM"/>
</dbReference>
<dbReference type="InterPro" id="IPR003912">
    <property type="entry name" value="Protea_act_rcpt"/>
</dbReference>
<dbReference type="InterPro" id="IPR000935">
    <property type="entry name" value="Thrmbn_rcpt"/>
</dbReference>
<dbReference type="PANTHER" id="PTHR24232">
    <property type="entry name" value="G-PROTEIN COUPLED RECEPTOR"/>
    <property type="match status" value="1"/>
</dbReference>
<dbReference type="PANTHER" id="PTHR24232:SF20">
    <property type="entry name" value="PROTEINASE-ACTIVATED RECEPTOR 1"/>
    <property type="match status" value="1"/>
</dbReference>
<dbReference type="Pfam" id="PF00001">
    <property type="entry name" value="7tm_1"/>
    <property type="match status" value="1"/>
</dbReference>
<dbReference type="PRINTS" id="PR00237">
    <property type="entry name" value="GPCRRHODOPSN"/>
</dbReference>
<dbReference type="PRINTS" id="PR01428">
    <property type="entry name" value="PROTEASEAR"/>
</dbReference>
<dbReference type="PRINTS" id="PR00908">
    <property type="entry name" value="THROMBINR"/>
</dbReference>
<dbReference type="SUPFAM" id="SSF81321">
    <property type="entry name" value="Family A G protein-coupled receptor-like"/>
    <property type="match status" value="1"/>
</dbReference>
<dbReference type="PROSITE" id="PS00237">
    <property type="entry name" value="G_PROTEIN_RECEP_F1_1"/>
    <property type="match status" value="1"/>
</dbReference>
<dbReference type="PROSITE" id="PS50262">
    <property type="entry name" value="G_PROTEIN_RECEP_F1_2"/>
    <property type="match status" value="1"/>
</dbReference>